<evidence type="ECO:0000255" key="1">
    <source>
        <dbReference type="HAMAP-Rule" id="MF_00484"/>
    </source>
</evidence>
<keyword id="KW-0320">Glycogen biosynthesis</keyword>
<keyword id="KW-0328">Glycosyltransferase</keyword>
<keyword id="KW-1185">Reference proteome</keyword>
<keyword id="KW-0808">Transferase</keyword>
<comment type="function">
    <text evidence="1">Synthesizes alpha-1,4-glucan chains using ADP-glucose.</text>
</comment>
<comment type="catalytic activity">
    <reaction evidence="1">
        <text>[(1-&gt;4)-alpha-D-glucosyl](n) + ADP-alpha-D-glucose = [(1-&gt;4)-alpha-D-glucosyl](n+1) + ADP + H(+)</text>
        <dbReference type="Rhea" id="RHEA:18189"/>
        <dbReference type="Rhea" id="RHEA-COMP:9584"/>
        <dbReference type="Rhea" id="RHEA-COMP:9587"/>
        <dbReference type="ChEBI" id="CHEBI:15378"/>
        <dbReference type="ChEBI" id="CHEBI:15444"/>
        <dbReference type="ChEBI" id="CHEBI:57498"/>
        <dbReference type="ChEBI" id="CHEBI:456216"/>
        <dbReference type="EC" id="2.4.1.21"/>
    </reaction>
</comment>
<comment type="pathway">
    <text evidence="1">Glycan biosynthesis; glycogen biosynthesis.</text>
</comment>
<comment type="similarity">
    <text evidence="1">Belongs to the glycosyltransferase 1 family. Bacterial/plant glycogen synthase subfamily.</text>
</comment>
<sequence length="500" mass="57814">MFDRPLKILFVSSEVVPFAKTGGLADVAGSLPKALATVVDHGLSHHDVRVAMPRYKMIEDARYVTDFPVWFADKNHEAIIRQREIEAQFQGARHTVPVYMIDNYQYYYRDGIYVFDDEAERFGFFCKAVLEMLPRLGWQPDVIHCNDWQCGPIPLFLKTHYRGDPFFSRMATVFTIHNLQYQGNFPKEVLHMLGLGKEYFRPEALEFYGSVSFMKAGIQYADVLTTVSRTYAREIQTPEYGQRMEGVLRQRAHELYGIVNGINYHEFDPKTDPRLHRNYDVDHWEHKKENKFTLQREMNLPVRDVPVLGLITRLVDQKGLDLIAEIIDELMRLDIQMVILGKGDKYYEDMFREMKVQHPGKIAAHIGFNVVLAQRIYAGSDMFLMPSRFEPCGLGQLISLRYGTIPIVRETGGLADTVNEYDLATGGGNGFVFKEYDARALYSAIARALKLYREDQEAWGRLVRNAMEMDFSWARSAVEYLQVYRDAMEKVSEERGIRIA</sequence>
<gene>
    <name evidence="1" type="primary">glgA</name>
    <name type="ordered locus">Daud_1322</name>
</gene>
<organism>
    <name type="scientific">Desulforudis audaxviator (strain MP104C)</name>
    <dbReference type="NCBI Taxonomy" id="477974"/>
    <lineage>
        <taxon>Bacteria</taxon>
        <taxon>Bacillati</taxon>
        <taxon>Bacillota</taxon>
        <taxon>Clostridia</taxon>
        <taxon>Thermoanaerobacterales</taxon>
        <taxon>Candidatus Desulforudaceae</taxon>
        <taxon>Candidatus Desulforudis</taxon>
    </lineage>
</organism>
<feature type="chain" id="PRO_1000206426" description="Glycogen synthase">
    <location>
        <begin position="1"/>
        <end position="500"/>
    </location>
</feature>
<feature type="binding site" evidence="1">
    <location>
        <position position="20"/>
    </location>
    <ligand>
        <name>ADP-alpha-D-glucose</name>
        <dbReference type="ChEBI" id="CHEBI:57498"/>
    </ligand>
</feature>
<proteinExistence type="inferred from homology"/>
<dbReference type="EC" id="2.4.1.21" evidence="1"/>
<dbReference type="EMBL" id="CP000860">
    <property type="protein sequence ID" value="ACA59832.1"/>
    <property type="molecule type" value="Genomic_DNA"/>
</dbReference>
<dbReference type="RefSeq" id="WP_012302417.1">
    <property type="nucleotide sequence ID" value="NC_010424.1"/>
</dbReference>
<dbReference type="SMR" id="B1I4F5"/>
<dbReference type="STRING" id="477974.Daud_1322"/>
<dbReference type="CAZy" id="GT5">
    <property type="family name" value="Glycosyltransferase Family 5"/>
</dbReference>
<dbReference type="KEGG" id="dau:Daud_1322"/>
<dbReference type="eggNOG" id="COG0297">
    <property type="taxonomic scope" value="Bacteria"/>
</dbReference>
<dbReference type="HOGENOM" id="CLU_009583_18_5_9"/>
<dbReference type="OrthoDB" id="9808590at2"/>
<dbReference type="UniPathway" id="UPA00164"/>
<dbReference type="Proteomes" id="UP000008544">
    <property type="component" value="Chromosome"/>
</dbReference>
<dbReference type="GO" id="GO:0009011">
    <property type="term" value="F:alpha-1,4-glucan glucosyltransferase (ADP-glucose donor) activity"/>
    <property type="evidence" value="ECO:0007669"/>
    <property type="project" value="UniProtKB-UniRule"/>
</dbReference>
<dbReference type="GO" id="GO:0004373">
    <property type="term" value="F:alpha-1,4-glucan glucosyltransferase (UDP-glucose donor) activity"/>
    <property type="evidence" value="ECO:0007669"/>
    <property type="project" value="InterPro"/>
</dbReference>
<dbReference type="GO" id="GO:0005978">
    <property type="term" value="P:glycogen biosynthetic process"/>
    <property type="evidence" value="ECO:0007669"/>
    <property type="project" value="UniProtKB-UniRule"/>
</dbReference>
<dbReference type="CDD" id="cd03791">
    <property type="entry name" value="GT5_Glycogen_synthase_DULL1-like"/>
    <property type="match status" value="1"/>
</dbReference>
<dbReference type="Gene3D" id="3.40.50.2000">
    <property type="entry name" value="Glycogen Phosphorylase B"/>
    <property type="match status" value="2"/>
</dbReference>
<dbReference type="HAMAP" id="MF_00484">
    <property type="entry name" value="Glycogen_synth"/>
    <property type="match status" value="1"/>
</dbReference>
<dbReference type="InterPro" id="IPR001296">
    <property type="entry name" value="Glyco_trans_1"/>
</dbReference>
<dbReference type="InterPro" id="IPR011835">
    <property type="entry name" value="GS/SS"/>
</dbReference>
<dbReference type="InterPro" id="IPR013534">
    <property type="entry name" value="Starch_synth_cat_dom"/>
</dbReference>
<dbReference type="NCBIfam" id="TIGR02095">
    <property type="entry name" value="glgA"/>
    <property type="match status" value="1"/>
</dbReference>
<dbReference type="NCBIfam" id="NF001899">
    <property type="entry name" value="PRK00654.1-2"/>
    <property type="match status" value="1"/>
</dbReference>
<dbReference type="PANTHER" id="PTHR45825:SF11">
    <property type="entry name" value="ALPHA AMYLASE DOMAIN-CONTAINING PROTEIN"/>
    <property type="match status" value="1"/>
</dbReference>
<dbReference type="PANTHER" id="PTHR45825">
    <property type="entry name" value="GRANULE-BOUND STARCH SYNTHASE 1, CHLOROPLASTIC/AMYLOPLASTIC"/>
    <property type="match status" value="1"/>
</dbReference>
<dbReference type="Pfam" id="PF08323">
    <property type="entry name" value="Glyco_transf_5"/>
    <property type="match status" value="1"/>
</dbReference>
<dbReference type="Pfam" id="PF00534">
    <property type="entry name" value="Glycos_transf_1"/>
    <property type="match status" value="1"/>
</dbReference>
<dbReference type="SUPFAM" id="SSF53756">
    <property type="entry name" value="UDP-Glycosyltransferase/glycogen phosphorylase"/>
    <property type="match status" value="1"/>
</dbReference>
<accession>B1I4F5</accession>
<name>GLGA_DESAP</name>
<reference key="1">
    <citation type="submission" date="2007-10" db="EMBL/GenBank/DDBJ databases">
        <title>Complete sequence of chromosome of Desulforudis audaxviator MP104C.</title>
        <authorList>
            <person name="Copeland A."/>
            <person name="Lucas S."/>
            <person name="Lapidus A."/>
            <person name="Barry K."/>
            <person name="Glavina del Rio T."/>
            <person name="Dalin E."/>
            <person name="Tice H."/>
            <person name="Bruce D."/>
            <person name="Pitluck S."/>
            <person name="Lowry S.R."/>
            <person name="Larimer F."/>
            <person name="Land M.L."/>
            <person name="Hauser L."/>
            <person name="Kyrpides N."/>
            <person name="Ivanova N.N."/>
            <person name="Richardson P."/>
        </authorList>
    </citation>
    <scope>NUCLEOTIDE SEQUENCE [LARGE SCALE GENOMIC DNA]</scope>
    <source>
        <strain>MP104C</strain>
    </source>
</reference>
<protein>
    <recommendedName>
        <fullName evidence="1">Glycogen synthase</fullName>
        <ecNumber evidence="1">2.4.1.21</ecNumber>
    </recommendedName>
    <alternativeName>
        <fullName evidence="1">Starch [bacterial glycogen] synthase</fullName>
    </alternativeName>
</protein>